<name>PPR21_XENLA</name>
<gene>
    <name type="primary">ppp1r21</name>
    <name type="synonym">ccdc128</name>
    <name type="synonym">klraq1</name>
</gene>
<feature type="chain" id="PRO_0000286102" description="Protein phosphatase 1 regulatory subunit 21">
    <location>
        <begin position="1"/>
        <end position="776"/>
    </location>
</feature>
<feature type="coiled-coil region" evidence="2">
    <location>
        <begin position="4"/>
        <end position="206"/>
    </location>
</feature>
<feature type="coiled-coil region" evidence="2">
    <location>
        <begin position="432"/>
        <end position="466"/>
    </location>
</feature>
<feature type="coiled-coil region" evidence="2">
    <location>
        <begin position="555"/>
        <end position="597"/>
    </location>
</feature>
<sequence length="776" mass="88426">MATGDLQGKYQKLAQEYSKLRAQNQVLKRAVVDEQANGTALKEQLKMKDQSLRKQQQEMDSLTFRNQQLAKRVELLQDELSLMDVKGKKTKKNMDTSQLSQEQKSVFDEDLQKKIEENERLHIQFFEASETHRQMESELTSRLQELETNTAQHQAVVDGLTQKYMDTIEKLQGDKAKLEVKCQALEREAKDCRLRTEDCQNQLKTLHTDLSSRLDDSLVIINEKLPFNDTRTSQLNALNVPVHNKRYQLKARELANQGLSFVRDLVTALLNFHTYTEQRVQIFPIDSAIDVVSPLNKKFSEYLHENASYVRPLEDGMLQLFESITEDTVTVLETAVKLKIFSENFSSYVCFLQKILPYQLKSLEEESEFSSGTSALRSRNQELHKDMQKITAVFDKLKTYITLLALPSTKPEGLLRTNYGTILTQISEALHRLHDISQELSKHYNNKAALEQELPAATDKLKTTNDCVLSSLAALTNVTSKIATFFGNNLDYFISSLSYGPKGGRGFTNPLSAETMLVYKKKAAQYMNNLRKPCPASVPYEEALVNRRVLLSSTESREGLAQQVQQSLEKIGKLEQEKEHWMLEAQLSKIKLEKETLRIAALIKGTEKGQLPEVPHDNALLLDAGEHGKGNSTETKSTSLIGMLTVTIEDLQAPDHDSREELIKNHYMTRIAELTTHLQQADSKAVHLYAECRALAKRLTLSDKSNRSLTEETKYSVQSISKLQDELITTKRSYEDQLSMMSDHLCVMNETLSKQREEIDTLKMANKGNSKKNKMR</sequence>
<organism>
    <name type="scientific">Xenopus laevis</name>
    <name type="common">African clawed frog</name>
    <dbReference type="NCBI Taxonomy" id="8355"/>
    <lineage>
        <taxon>Eukaryota</taxon>
        <taxon>Metazoa</taxon>
        <taxon>Chordata</taxon>
        <taxon>Craniata</taxon>
        <taxon>Vertebrata</taxon>
        <taxon>Euteleostomi</taxon>
        <taxon>Amphibia</taxon>
        <taxon>Batrachia</taxon>
        <taxon>Anura</taxon>
        <taxon>Pipoidea</taxon>
        <taxon>Pipidae</taxon>
        <taxon>Xenopodinae</taxon>
        <taxon>Xenopus</taxon>
        <taxon>Xenopus</taxon>
    </lineage>
</organism>
<comment type="function">
    <text evidence="1">Component of the FERRY complex (Five-subunit Endosomal Rab5 and RNA/ribosome intermediary). The FERRY complex directly interacts with mRNAs and RAB5A, and functions as a RAB5A effector involved in the localization and the distribution of specific mRNAs most likely by mediating their endosomal transport. The complex recruits mRNAs and ribosomes to early endosomes through direct mRNA-interaction (By similarity). Putative regulator of protein phosphatase 1 (PP1) activity. May play a role in the endosomal sorting process or in endosome maturation pathway (By similarity).</text>
</comment>
<comment type="subunit">
    <text evidence="1">Component of the FERRY complex.</text>
</comment>
<comment type="subcellular location">
    <subcellularLocation>
        <location evidence="1">Early endosome</location>
    </subcellularLocation>
</comment>
<comment type="domain">
    <text evidence="1">Coiled-coil domains of PPP1R21 are essential for RNA binding.</text>
</comment>
<keyword id="KW-0175">Coiled coil</keyword>
<keyword id="KW-0967">Endosome</keyword>
<keyword id="KW-1185">Reference proteome</keyword>
<keyword id="KW-0694">RNA-binding</keyword>
<accession>Q6IR70</accession>
<reference key="1">
    <citation type="submission" date="2004-05" db="EMBL/GenBank/DDBJ databases">
        <authorList>
            <consortium name="NIH - Xenopus Gene Collection (XGC) project"/>
        </authorList>
    </citation>
    <scope>NUCLEOTIDE SEQUENCE [LARGE SCALE MRNA]</scope>
    <source>
        <tissue>Kidney</tissue>
    </source>
</reference>
<protein>
    <recommendedName>
        <fullName>Protein phosphatase 1 regulatory subunit 21</fullName>
    </recommendedName>
    <alternativeName>
        <fullName>Coiled-coil domain-containing protein 128</fullName>
    </alternativeName>
    <alternativeName>
        <fullName evidence="1">Ferry endosomal RAB5 effector complex subunit 2</fullName>
        <shortName evidence="1">Fy-2</shortName>
    </alternativeName>
    <alternativeName>
        <fullName>KLRAQ motif-containing protein 1</fullName>
    </alternativeName>
</protein>
<evidence type="ECO:0000250" key="1">
    <source>
        <dbReference type="UniProtKB" id="Q6ZMI0"/>
    </source>
</evidence>
<evidence type="ECO:0000255" key="2"/>
<dbReference type="EMBL" id="BC071030">
    <property type="protein sequence ID" value="AAH71030.1"/>
    <property type="molecule type" value="mRNA"/>
</dbReference>
<dbReference type="RefSeq" id="NP_001085000.1">
    <property type="nucleotide sequence ID" value="NM_001091531.1"/>
</dbReference>
<dbReference type="SMR" id="Q6IR70"/>
<dbReference type="DNASU" id="432064"/>
<dbReference type="GeneID" id="432064"/>
<dbReference type="KEGG" id="xla:432064"/>
<dbReference type="AGR" id="Xenbase:XB-GENE-986661"/>
<dbReference type="CTD" id="432064"/>
<dbReference type="Xenbase" id="XB-GENE-986661">
    <property type="gene designation" value="ppp1r21.L"/>
</dbReference>
<dbReference type="OrthoDB" id="5566667at2759"/>
<dbReference type="Proteomes" id="UP000186698">
    <property type="component" value="Chromosome 5L"/>
</dbReference>
<dbReference type="Bgee" id="432064">
    <property type="expression patterns" value="Expressed in blastula and 19 other cell types or tissues"/>
</dbReference>
<dbReference type="GO" id="GO:0005769">
    <property type="term" value="C:early endosome"/>
    <property type="evidence" value="ECO:0000250"/>
    <property type="project" value="UniProtKB"/>
</dbReference>
<dbReference type="GO" id="GO:0016020">
    <property type="term" value="C:membrane"/>
    <property type="evidence" value="ECO:0007669"/>
    <property type="project" value="TreeGrafter"/>
</dbReference>
<dbReference type="GO" id="GO:0003723">
    <property type="term" value="F:RNA binding"/>
    <property type="evidence" value="ECO:0007669"/>
    <property type="project" value="UniProtKB-KW"/>
</dbReference>
<dbReference type="InterPro" id="IPR040024">
    <property type="entry name" value="PPP1R21"/>
</dbReference>
<dbReference type="InterPro" id="IPR049372">
    <property type="entry name" value="PPP1R21_C"/>
</dbReference>
<dbReference type="InterPro" id="IPR019343">
    <property type="entry name" value="PPP1R21_N"/>
</dbReference>
<dbReference type="InterPro" id="IPR019348">
    <property type="entry name" value="PPP1R21_six_helix"/>
</dbReference>
<dbReference type="PANTHER" id="PTHR21448:SF0">
    <property type="entry name" value="PROTEIN PHOSPHATASE 1 REGULATORY SUBUNIT 21"/>
    <property type="match status" value="1"/>
</dbReference>
<dbReference type="PANTHER" id="PTHR21448">
    <property type="entry name" value="SMOOTH MUSCLE MYOSIN HEAVY CHAIN-RELATED"/>
    <property type="match status" value="1"/>
</dbReference>
<dbReference type="Pfam" id="PF10205">
    <property type="entry name" value="KLRAQ"/>
    <property type="match status" value="1"/>
</dbReference>
<dbReference type="Pfam" id="PF21636">
    <property type="entry name" value="PPP1R21_C"/>
    <property type="match status" value="1"/>
</dbReference>
<dbReference type="Pfam" id="PF10212">
    <property type="entry name" value="PPP1R21_helical"/>
    <property type="match status" value="1"/>
</dbReference>
<dbReference type="SMART" id="SM01254">
    <property type="entry name" value="KLRAQ"/>
    <property type="match status" value="1"/>
</dbReference>
<proteinExistence type="evidence at transcript level"/>